<evidence type="ECO:0000250" key="1"/>
<evidence type="ECO:0000255" key="2">
    <source>
        <dbReference type="HAMAP-Rule" id="MF_02006"/>
    </source>
</evidence>
<dbReference type="EC" id="6.1.1.1" evidence="2"/>
<dbReference type="EMBL" id="CP000038">
    <property type="protein sequence ID" value="AAZ88219.1"/>
    <property type="molecule type" value="Genomic_DNA"/>
</dbReference>
<dbReference type="RefSeq" id="WP_001295400.1">
    <property type="nucleotide sequence ID" value="NC_007384.1"/>
</dbReference>
<dbReference type="SMR" id="Q3Z1Z3"/>
<dbReference type="GeneID" id="93775791"/>
<dbReference type="KEGG" id="ssn:SSON_1519"/>
<dbReference type="HOGENOM" id="CLU_024003_0_3_6"/>
<dbReference type="Proteomes" id="UP000002529">
    <property type="component" value="Chromosome"/>
</dbReference>
<dbReference type="GO" id="GO:0005829">
    <property type="term" value="C:cytosol"/>
    <property type="evidence" value="ECO:0007669"/>
    <property type="project" value="TreeGrafter"/>
</dbReference>
<dbReference type="GO" id="GO:0005524">
    <property type="term" value="F:ATP binding"/>
    <property type="evidence" value="ECO:0007669"/>
    <property type="project" value="UniProtKB-UniRule"/>
</dbReference>
<dbReference type="GO" id="GO:0003723">
    <property type="term" value="F:RNA binding"/>
    <property type="evidence" value="ECO:0007669"/>
    <property type="project" value="UniProtKB-KW"/>
</dbReference>
<dbReference type="GO" id="GO:0004831">
    <property type="term" value="F:tyrosine-tRNA ligase activity"/>
    <property type="evidence" value="ECO:0007669"/>
    <property type="project" value="UniProtKB-UniRule"/>
</dbReference>
<dbReference type="GO" id="GO:0006437">
    <property type="term" value="P:tyrosyl-tRNA aminoacylation"/>
    <property type="evidence" value="ECO:0007669"/>
    <property type="project" value="UniProtKB-UniRule"/>
</dbReference>
<dbReference type="CDD" id="cd00165">
    <property type="entry name" value="S4"/>
    <property type="match status" value="1"/>
</dbReference>
<dbReference type="CDD" id="cd00805">
    <property type="entry name" value="TyrRS_core"/>
    <property type="match status" value="1"/>
</dbReference>
<dbReference type="FunFam" id="1.10.240.10:FF:000001">
    <property type="entry name" value="Tyrosine--tRNA ligase"/>
    <property type="match status" value="1"/>
</dbReference>
<dbReference type="FunFam" id="3.10.290.10:FF:000007">
    <property type="entry name" value="Tyrosine--tRNA ligase"/>
    <property type="match status" value="1"/>
</dbReference>
<dbReference type="FunFam" id="3.40.50.620:FF:000008">
    <property type="entry name" value="Tyrosine--tRNA ligase"/>
    <property type="match status" value="1"/>
</dbReference>
<dbReference type="Gene3D" id="3.40.50.620">
    <property type="entry name" value="HUPs"/>
    <property type="match status" value="1"/>
</dbReference>
<dbReference type="Gene3D" id="3.10.290.10">
    <property type="entry name" value="RNA-binding S4 domain"/>
    <property type="match status" value="1"/>
</dbReference>
<dbReference type="Gene3D" id="1.10.240.10">
    <property type="entry name" value="Tyrosyl-Transfer RNA Synthetase"/>
    <property type="match status" value="1"/>
</dbReference>
<dbReference type="HAMAP" id="MF_02006">
    <property type="entry name" value="Tyr_tRNA_synth_type1"/>
    <property type="match status" value="1"/>
</dbReference>
<dbReference type="InterPro" id="IPR001412">
    <property type="entry name" value="aa-tRNA-synth_I_CS"/>
</dbReference>
<dbReference type="InterPro" id="IPR002305">
    <property type="entry name" value="aa-tRNA-synth_Ic"/>
</dbReference>
<dbReference type="InterPro" id="IPR014729">
    <property type="entry name" value="Rossmann-like_a/b/a_fold"/>
</dbReference>
<dbReference type="InterPro" id="IPR002942">
    <property type="entry name" value="S4_RNA-bd"/>
</dbReference>
<dbReference type="InterPro" id="IPR036986">
    <property type="entry name" value="S4_RNA-bd_sf"/>
</dbReference>
<dbReference type="InterPro" id="IPR054608">
    <property type="entry name" value="SYY-like_C"/>
</dbReference>
<dbReference type="InterPro" id="IPR002307">
    <property type="entry name" value="Tyr-tRNA-ligase"/>
</dbReference>
<dbReference type="InterPro" id="IPR024088">
    <property type="entry name" value="Tyr-tRNA-ligase_bac-type"/>
</dbReference>
<dbReference type="InterPro" id="IPR024107">
    <property type="entry name" value="Tyr-tRNA-ligase_bac_1"/>
</dbReference>
<dbReference type="NCBIfam" id="TIGR00234">
    <property type="entry name" value="tyrS"/>
    <property type="match status" value="1"/>
</dbReference>
<dbReference type="PANTHER" id="PTHR11766:SF0">
    <property type="entry name" value="TYROSINE--TRNA LIGASE, MITOCHONDRIAL"/>
    <property type="match status" value="1"/>
</dbReference>
<dbReference type="PANTHER" id="PTHR11766">
    <property type="entry name" value="TYROSYL-TRNA SYNTHETASE"/>
    <property type="match status" value="1"/>
</dbReference>
<dbReference type="Pfam" id="PF22421">
    <property type="entry name" value="SYY_C-terminal"/>
    <property type="match status" value="1"/>
</dbReference>
<dbReference type="Pfam" id="PF00579">
    <property type="entry name" value="tRNA-synt_1b"/>
    <property type="match status" value="1"/>
</dbReference>
<dbReference type="PRINTS" id="PR01040">
    <property type="entry name" value="TRNASYNTHTYR"/>
</dbReference>
<dbReference type="SMART" id="SM00363">
    <property type="entry name" value="S4"/>
    <property type="match status" value="1"/>
</dbReference>
<dbReference type="SUPFAM" id="SSF55174">
    <property type="entry name" value="Alpha-L RNA-binding motif"/>
    <property type="match status" value="1"/>
</dbReference>
<dbReference type="SUPFAM" id="SSF52374">
    <property type="entry name" value="Nucleotidylyl transferase"/>
    <property type="match status" value="1"/>
</dbReference>
<dbReference type="PROSITE" id="PS00178">
    <property type="entry name" value="AA_TRNA_LIGASE_I"/>
    <property type="match status" value="1"/>
</dbReference>
<dbReference type="PROSITE" id="PS50889">
    <property type="entry name" value="S4"/>
    <property type="match status" value="1"/>
</dbReference>
<protein>
    <recommendedName>
        <fullName evidence="2">Tyrosine--tRNA ligase</fullName>
        <ecNumber evidence="2">6.1.1.1</ecNumber>
    </recommendedName>
    <alternativeName>
        <fullName evidence="2">Tyrosyl-tRNA synthetase</fullName>
        <shortName evidence="2">TyrRS</shortName>
    </alternativeName>
</protein>
<reference key="1">
    <citation type="journal article" date="2005" name="Nucleic Acids Res.">
        <title>Genome dynamics and diversity of Shigella species, the etiologic agents of bacillary dysentery.</title>
        <authorList>
            <person name="Yang F."/>
            <person name="Yang J."/>
            <person name="Zhang X."/>
            <person name="Chen L."/>
            <person name="Jiang Y."/>
            <person name="Yan Y."/>
            <person name="Tang X."/>
            <person name="Wang J."/>
            <person name="Xiong Z."/>
            <person name="Dong J."/>
            <person name="Xue Y."/>
            <person name="Zhu Y."/>
            <person name="Xu X."/>
            <person name="Sun L."/>
            <person name="Chen S."/>
            <person name="Nie H."/>
            <person name="Peng J."/>
            <person name="Xu J."/>
            <person name="Wang Y."/>
            <person name="Yuan Z."/>
            <person name="Wen Y."/>
            <person name="Yao Z."/>
            <person name="Shen Y."/>
            <person name="Qiang B."/>
            <person name="Hou Y."/>
            <person name="Yu J."/>
            <person name="Jin Q."/>
        </authorList>
    </citation>
    <scope>NUCLEOTIDE SEQUENCE [LARGE SCALE GENOMIC DNA]</scope>
    <source>
        <strain>Ss046</strain>
    </source>
</reference>
<gene>
    <name evidence="2" type="primary">tyrS</name>
    <name type="ordered locus">SSON_1519</name>
</gene>
<comment type="function">
    <text evidence="2">Catalyzes the attachment of tyrosine to tRNA(Tyr) in a two-step reaction: tyrosine is first activated by ATP to form Tyr-AMP and then transferred to the acceptor end of tRNA(Tyr).</text>
</comment>
<comment type="catalytic activity">
    <reaction evidence="2">
        <text>tRNA(Tyr) + L-tyrosine + ATP = L-tyrosyl-tRNA(Tyr) + AMP + diphosphate + H(+)</text>
        <dbReference type="Rhea" id="RHEA:10220"/>
        <dbReference type="Rhea" id="RHEA-COMP:9706"/>
        <dbReference type="Rhea" id="RHEA-COMP:9707"/>
        <dbReference type="ChEBI" id="CHEBI:15378"/>
        <dbReference type="ChEBI" id="CHEBI:30616"/>
        <dbReference type="ChEBI" id="CHEBI:33019"/>
        <dbReference type="ChEBI" id="CHEBI:58315"/>
        <dbReference type="ChEBI" id="CHEBI:78442"/>
        <dbReference type="ChEBI" id="CHEBI:78536"/>
        <dbReference type="ChEBI" id="CHEBI:456215"/>
        <dbReference type="EC" id="6.1.1.1"/>
    </reaction>
</comment>
<comment type="subunit">
    <text evidence="2">Homodimer.</text>
</comment>
<comment type="subcellular location">
    <subcellularLocation>
        <location evidence="2">Cytoplasm</location>
    </subcellularLocation>
</comment>
<comment type="similarity">
    <text evidence="2">Belongs to the class-I aminoacyl-tRNA synthetase family. TyrS type 1 subfamily.</text>
</comment>
<name>SYY_SHISS</name>
<sequence>MASSNLIKQLQERGLVAQVTDEEALAERLAQGPIALYCGFDPTADSLHLGHLVPLLCLKRFQQAGHKPVALVGGATGLIGDPSFKAAERKLNTEETVQEWVDKIRKQVAPFLDFDCGENSAIAANNYDWFGNMNVLTFLRDIGKHFSVNQMINKEAVKQRLNREDQGISFTEFSYNLLQGYDFACLNKQYGVVLQIGGSDQWGNITSGIDLTRRLHQNQVFGLTVPLITKADGTKFGKTEGGAVWLDPKKTSPYKFYQFWINTADADVYRFLKFFTFMSIEEINALEEEDKNSGKAPRAQYVLAEQVTRLVHGEEGLQAAKRITECLFSGSLSALSEADFEQLAQDGVPMVEMEKGADLMQALVDSELQPSRGQARKTIASNAITINGEKQSDPEYFFKEEDRLFGRFTLLRRGKKNYCLICWK</sequence>
<proteinExistence type="inferred from homology"/>
<organism>
    <name type="scientific">Shigella sonnei (strain Ss046)</name>
    <dbReference type="NCBI Taxonomy" id="300269"/>
    <lineage>
        <taxon>Bacteria</taxon>
        <taxon>Pseudomonadati</taxon>
        <taxon>Pseudomonadota</taxon>
        <taxon>Gammaproteobacteria</taxon>
        <taxon>Enterobacterales</taxon>
        <taxon>Enterobacteriaceae</taxon>
        <taxon>Shigella</taxon>
    </lineage>
</organism>
<accession>Q3Z1Z3</accession>
<keyword id="KW-0007">Acetylation</keyword>
<keyword id="KW-0030">Aminoacyl-tRNA synthetase</keyword>
<keyword id="KW-0067">ATP-binding</keyword>
<keyword id="KW-0963">Cytoplasm</keyword>
<keyword id="KW-0436">Ligase</keyword>
<keyword id="KW-0547">Nucleotide-binding</keyword>
<keyword id="KW-0648">Protein biosynthesis</keyword>
<keyword id="KW-1185">Reference proteome</keyword>
<keyword id="KW-0694">RNA-binding</keyword>
<feature type="initiator methionine" description="Removed" evidence="1">
    <location>
        <position position="1"/>
    </location>
</feature>
<feature type="chain" id="PRO_0000234769" description="Tyrosine--tRNA ligase">
    <location>
        <begin position="2"/>
        <end position="424"/>
    </location>
</feature>
<feature type="domain" description="S4 RNA-binding" evidence="2">
    <location>
        <begin position="357"/>
        <end position="414"/>
    </location>
</feature>
<feature type="short sequence motif" description="'HIGH' region">
    <location>
        <begin position="42"/>
        <end position="51"/>
    </location>
</feature>
<feature type="short sequence motif" description="'KMSKS' region">
    <location>
        <begin position="235"/>
        <end position="239"/>
    </location>
</feature>
<feature type="binding site" evidence="2">
    <location>
        <position position="37"/>
    </location>
    <ligand>
        <name>L-tyrosine</name>
        <dbReference type="ChEBI" id="CHEBI:58315"/>
    </ligand>
</feature>
<feature type="binding site" evidence="2">
    <location>
        <position position="175"/>
    </location>
    <ligand>
        <name>L-tyrosine</name>
        <dbReference type="ChEBI" id="CHEBI:58315"/>
    </ligand>
</feature>
<feature type="binding site" evidence="2">
    <location>
        <position position="179"/>
    </location>
    <ligand>
        <name>L-tyrosine</name>
        <dbReference type="ChEBI" id="CHEBI:58315"/>
    </ligand>
</feature>
<feature type="binding site" evidence="2">
    <location>
        <position position="238"/>
    </location>
    <ligand>
        <name>ATP</name>
        <dbReference type="ChEBI" id="CHEBI:30616"/>
    </ligand>
</feature>
<feature type="modified residue" description="N6-acetyllysine" evidence="2">
    <location>
        <position position="144"/>
    </location>
</feature>